<evidence type="ECO:0000305" key="1"/>
<protein>
    <recommendedName>
        <fullName>Putative uncharacterized protein SH0120</fullName>
    </recommendedName>
</protein>
<feature type="chain" id="PRO_0000282196" description="Putative uncharacterized protein SH0120">
    <location>
        <begin position="1"/>
        <end position="182"/>
    </location>
</feature>
<dbReference type="EMBL" id="AP006716">
    <property type="protein sequence ID" value="BAE03429.1"/>
    <property type="molecule type" value="Genomic_DNA"/>
</dbReference>
<dbReference type="SMR" id="Q4LA96"/>
<dbReference type="KEGG" id="sha:SH0120"/>
<dbReference type="eggNOG" id="ENOG5033UD8">
    <property type="taxonomic scope" value="Bacteria"/>
</dbReference>
<dbReference type="HOGENOM" id="CLU_071589_1_0_9"/>
<dbReference type="Proteomes" id="UP000000543">
    <property type="component" value="Chromosome"/>
</dbReference>
<dbReference type="Gene3D" id="2.50.20.40">
    <property type="match status" value="1"/>
</dbReference>
<dbReference type="InterPro" id="IPR007595">
    <property type="entry name" value="Csa"/>
</dbReference>
<dbReference type="InterPro" id="IPR038641">
    <property type="entry name" value="Csa_sf"/>
</dbReference>
<dbReference type="NCBIfam" id="TIGR01742">
    <property type="entry name" value="SA_tandem_lipo"/>
    <property type="match status" value="1"/>
</dbReference>
<dbReference type="Pfam" id="PF04507">
    <property type="entry name" value="DUF576"/>
    <property type="match status" value="1"/>
</dbReference>
<proteinExistence type="uncertain"/>
<name>Y120_STAHJ</name>
<comment type="similarity">
    <text evidence="1">Belongs to the staphylococcal tandem lipoprotein family.</text>
</comment>
<comment type="caution">
    <text evidence="1">Could be the product of a pseudogene. The N-terminal region is truncated when compared to other members of the family.</text>
</comment>
<gene>
    <name type="ordered locus">SH0120</name>
</gene>
<accession>Q4LA96</accession>
<sequence length="182" mass="21355">MTIEPKGKYMESRGIFLYINHNTRTTKGYYYVRKTTDDSKGRLKDDEKRYPVKMEHNQIIPTKPIPNDKLKKEIENFKFFVQYANFKDINDYKNGDISYNPNIPSYSAKYQLNNNDYNVKQLRKRYDIPTNQAPKLLLKGDGDLKGSSVGSKNLEFTFVENKEEDIFFTDAVQFTPSEDDES</sequence>
<organism>
    <name type="scientific">Staphylococcus haemolyticus (strain JCSC1435)</name>
    <dbReference type="NCBI Taxonomy" id="279808"/>
    <lineage>
        <taxon>Bacteria</taxon>
        <taxon>Bacillati</taxon>
        <taxon>Bacillota</taxon>
        <taxon>Bacilli</taxon>
        <taxon>Bacillales</taxon>
        <taxon>Staphylococcaceae</taxon>
        <taxon>Staphylococcus</taxon>
    </lineage>
</organism>
<reference key="1">
    <citation type="journal article" date="2005" name="J. Bacteriol.">
        <title>Whole-genome sequencing of Staphylococcus haemolyticus uncovers the extreme plasticity of its genome and the evolution of human-colonizing staphylococcal species.</title>
        <authorList>
            <person name="Takeuchi F."/>
            <person name="Watanabe S."/>
            <person name="Baba T."/>
            <person name="Yuzawa H."/>
            <person name="Ito T."/>
            <person name="Morimoto Y."/>
            <person name="Kuroda M."/>
            <person name="Cui L."/>
            <person name="Takahashi M."/>
            <person name="Ankai A."/>
            <person name="Baba S."/>
            <person name="Fukui S."/>
            <person name="Lee J.C."/>
            <person name="Hiramatsu K."/>
        </authorList>
    </citation>
    <scope>NUCLEOTIDE SEQUENCE [LARGE SCALE GENOMIC DNA]</scope>
    <source>
        <strain>JCSC1435</strain>
    </source>
</reference>